<organism>
    <name type="scientific">Aliivibrio salmonicida (strain LFI1238)</name>
    <name type="common">Vibrio salmonicida (strain LFI1238)</name>
    <dbReference type="NCBI Taxonomy" id="316275"/>
    <lineage>
        <taxon>Bacteria</taxon>
        <taxon>Pseudomonadati</taxon>
        <taxon>Pseudomonadota</taxon>
        <taxon>Gammaproteobacteria</taxon>
        <taxon>Vibrionales</taxon>
        <taxon>Vibrionaceae</taxon>
        <taxon>Aliivibrio</taxon>
    </lineage>
</organism>
<dbReference type="EMBL" id="FM178379">
    <property type="protein sequence ID" value="CAQ78753.1"/>
    <property type="molecule type" value="Genomic_DNA"/>
</dbReference>
<dbReference type="RefSeq" id="WP_012549823.1">
    <property type="nucleotide sequence ID" value="NC_011312.1"/>
</dbReference>
<dbReference type="SMR" id="B6EIV9"/>
<dbReference type="KEGG" id="vsa:VSAL_I1068"/>
<dbReference type="eggNOG" id="COG3100">
    <property type="taxonomic scope" value="Bacteria"/>
</dbReference>
<dbReference type="HOGENOM" id="CLU_155118_1_0_6"/>
<dbReference type="Proteomes" id="UP000001730">
    <property type="component" value="Chromosome 1"/>
</dbReference>
<dbReference type="Gene3D" id="3.10.510.20">
    <property type="entry name" value="YcgL domain"/>
    <property type="match status" value="1"/>
</dbReference>
<dbReference type="HAMAP" id="MF_01866">
    <property type="entry name" value="UPF0745"/>
    <property type="match status" value="1"/>
</dbReference>
<dbReference type="InterPro" id="IPR038068">
    <property type="entry name" value="YcgL-like_sf"/>
</dbReference>
<dbReference type="InterPro" id="IPR027354">
    <property type="entry name" value="YcgL_dom"/>
</dbReference>
<dbReference type="PANTHER" id="PTHR38109">
    <property type="entry name" value="PROTEIN YCGL"/>
    <property type="match status" value="1"/>
</dbReference>
<dbReference type="PANTHER" id="PTHR38109:SF1">
    <property type="entry name" value="PROTEIN YCGL"/>
    <property type="match status" value="1"/>
</dbReference>
<dbReference type="Pfam" id="PF05166">
    <property type="entry name" value="YcgL"/>
    <property type="match status" value="1"/>
</dbReference>
<dbReference type="SUPFAM" id="SSF160191">
    <property type="entry name" value="YcgL-like"/>
    <property type="match status" value="1"/>
</dbReference>
<dbReference type="PROSITE" id="PS51648">
    <property type="entry name" value="YCGL"/>
    <property type="match status" value="1"/>
</dbReference>
<evidence type="ECO:0000255" key="1">
    <source>
        <dbReference type="HAMAP-Rule" id="MF_01866"/>
    </source>
</evidence>
<protein>
    <recommendedName>
        <fullName evidence="1">YcgL domain-containing protein VSAL_I1068</fullName>
    </recommendedName>
</protein>
<accession>B6EIV9</accession>
<name>Y1068_ALISL</name>
<proteinExistence type="inferred from homology"/>
<gene>
    <name type="ordered locus">VSAL_I1068</name>
</gene>
<reference key="1">
    <citation type="journal article" date="2008" name="BMC Genomics">
        <title>The genome sequence of the fish pathogen Aliivibrio salmonicida strain LFI1238 shows extensive evidence of gene decay.</title>
        <authorList>
            <person name="Hjerde E."/>
            <person name="Lorentzen M.S."/>
            <person name="Holden M.T."/>
            <person name="Seeger K."/>
            <person name="Paulsen S."/>
            <person name="Bason N."/>
            <person name="Churcher C."/>
            <person name="Harris D."/>
            <person name="Norbertczak H."/>
            <person name="Quail M.A."/>
            <person name="Sanders S."/>
            <person name="Thurston S."/>
            <person name="Parkhill J."/>
            <person name="Willassen N.P."/>
            <person name="Thomson N.R."/>
        </authorList>
    </citation>
    <scope>NUCLEOTIDE SEQUENCE [LARGE SCALE GENOMIC DNA]</scope>
    <source>
        <strain>LFI1238</strain>
    </source>
</reference>
<sequence>MYCSIYKSSKKQGAYLYIEKKDDFSPVPQELMTMFGTPKMVMVVNLEGRKLASVDIEKVEVSLKNDGYFLQLPPPPENLLEKYKQDKAKRNEK</sequence>
<feature type="chain" id="PRO_0000375279" description="YcgL domain-containing protein VSAL_I1068">
    <location>
        <begin position="1"/>
        <end position="93"/>
    </location>
</feature>
<feature type="domain" description="YcgL" evidence="1">
    <location>
        <begin position="1"/>
        <end position="84"/>
    </location>
</feature>